<keyword id="KW-0143">Chaperone</keyword>
<keyword id="KW-0963">Cytoplasm</keyword>
<keyword id="KW-0346">Stress response</keyword>
<organism>
    <name type="scientific">Salmonella agona (strain SL483)</name>
    <dbReference type="NCBI Taxonomy" id="454166"/>
    <lineage>
        <taxon>Bacteria</taxon>
        <taxon>Pseudomonadati</taxon>
        <taxon>Pseudomonadota</taxon>
        <taxon>Gammaproteobacteria</taxon>
        <taxon>Enterobacterales</taxon>
        <taxon>Enterobacteriaceae</taxon>
        <taxon>Salmonella</taxon>
    </lineage>
</organism>
<dbReference type="EMBL" id="CP001138">
    <property type="protein sequence ID" value="ACH50958.1"/>
    <property type="molecule type" value="Genomic_DNA"/>
</dbReference>
<dbReference type="RefSeq" id="WP_001246919.1">
    <property type="nucleotide sequence ID" value="NC_011149.1"/>
</dbReference>
<dbReference type="SMR" id="B5EY83"/>
<dbReference type="KEGG" id="sea:SeAg_B4035"/>
<dbReference type="HOGENOM" id="CLU_046737_4_2_6"/>
<dbReference type="Proteomes" id="UP000008819">
    <property type="component" value="Chromosome"/>
</dbReference>
<dbReference type="GO" id="GO:0005737">
    <property type="term" value="C:cytoplasm"/>
    <property type="evidence" value="ECO:0007669"/>
    <property type="project" value="UniProtKB-SubCell"/>
</dbReference>
<dbReference type="GO" id="GO:0050821">
    <property type="term" value="P:protein stabilization"/>
    <property type="evidence" value="ECO:0007669"/>
    <property type="project" value="UniProtKB-UniRule"/>
</dbReference>
<dbReference type="CDD" id="cd06470">
    <property type="entry name" value="ACD_IbpA-B_like"/>
    <property type="match status" value="1"/>
</dbReference>
<dbReference type="Gene3D" id="2.60.40.790">
    <property type="match status" value="1"/>
</dbReference>
<dbReference type="HAMAP" id="MF_02001">
    <property type="entry name" value="HSP20_IbpB"/>
    <property type="match status" value="1"/>
</dbReference>
<dbReference type="InterPro" id="IPR002068">
    <property type="entry name" value="A-crystallin/Hsp20_dom"/>
</dbReference>
<dbReference type="InterPro" id="IPR037913">
    <property type="entry name" value="ACD_IbpA/B"/>
</dbReference>
<dbReference type="InterPro" id="IPR008978">
    <property type="entry name" value="HSP20-like_chaperone"/>
</dbReference>
<dbReference type="InterPro" id="IPR022848">
    <property type="entry name" value="HSP20_IbpB"/>
</dbReference>
<dbReference type="NCBIfam" id="NF008618">
    <property type="entry name" value="PRK11597.1"/>
    <property type="match status" value="1"/>
</dbReference>
<dbReference type="PANTHER" id="PTHR47062">
    <property type="match status" value="1"/>
</dbReference>
<dbReference type="PANTHER" id="PTHR47062:SF2">
    <property type="entry name" value="SMALL HEAT SHOCK PROTEIN IBPB"/>
    <property type="match status" value="1"/>
</dbReference>
<dbReference type="Pfam" id="PF00011">
    <property type="entry name" value="HSP20"/>
    <property type="match status" value="1"/>
</dbReference>
<dbReference type="SUPFAM" id="SSF49764">
    <property type="entry name" value="HSP20-like chaperones"/>
    <property type="match status" value="1"/>
</dbReference>
<dbReference type="PROSITE" id="PS01031">
    <property type="entry name" value="SHSP"/>
    <property type="match status" value="1"/>
</dbReference>
<comment type="function">
    <text evidence="1">Associates with aggregated proteins, together with IbpA, to stabilize and protect them from irreversible denaturation and extensive proteolysis during heat shock and oxidative stress. Aggregated proteins bound to the IbpAB complex are more efficiently refolded and reactivated by the ATP-dependent chaperone systems ClpB and DnaK/DnaJ/GrpE. Its activity is ATP-independent.</text>
</comment>
<comment type="subunit">
    <text evidence="1">Homodimer. Forms homomultimers of about 100-150 subunits at optimal growth temperatures. Conformation changes to oligomers at high temperatures or high ionic concentrations. The decrease in size of the multimers is accompanied by an increase in chaperone activity.</text>
</comment>
<comment type="subcellular location">
    <subcellularLocation>
        <location evidence="1">Cytoplasm</location>
    </subcellularLocation>
</comment>
<comment type="domain">
    <text evidence="1">The N- and C-terminal flexible termini are involved in oligomerization and in the binding of non-native substrate proteins, and are essential for chaperone activity.</text>
</comment>
<comment type="similarity">
    <text evidence="1 2">Belongs to the small heat shock protein (HSP20) family.</text>
</comment>
<gene>
    <name evidence="1" type="primary">ibpB</name>
    <name type="ordered locus">SeAg_B4035</name>
</gene>
<protein>
    <recommendedName>
        <fullName evidence="1">Small heat shock protein IbpB</fullName>
    </recommendedName>
    <alternativeName>
        <fullName evidence="1">16 kDa heat shock protein B</fullName>
    </alternativeName>
</protein>
<accession>B5EY83</accession>
<evidence type="ECO:0000255" key="1">
    <source>
        <dbReference type="HAMAP-Rule" id="MF_02001"/>
    </source>
</evidence>
<evidence type="ECO:0000255" key="2">
    <source>
        <dbReference type="PROSITE-ProRule" id="PRU00285"/>
    </source>
</evidence>
<reference key="1">
    <citation type="journal article" date="2011" name="J. Bacteriol.">
        <title>Comparative genomics of 28 Salmonella enterica isolates: evidence for CRISPR-mediated adaptive sublineage evolution.</title>
        <authorList>
            <person name="Fricke W.F."/>
            <person name="Mammel M.K."/>
            <person name="McDermott P.F."/>
            <person name="Tartera C."/>
            <person name="White D.G."/>
            <person name="Leclerc J.E."/>
            <person name="Ravel J."/>
            <person name="Cebula T.A."/>
        </authorList>
    </citation>
    <scope>NUCLEOTIDE SEQUENCE [LARGE SCALE GENOMIC DNA]</scope>
    <source>
        <strain>SL483</strain>
    </source>
</reference>
<name>IBPB_SALA4</name>
<sequence>MRNYDLSPLLRQWIGFDKLANALQNSGESQSFPPYNIEKSDDNHYRITLALAGFRQEDLDIQLEGTRLTVKGTPEQPENEPKWLHQGLVMQPFSLSFTLAENMEVSGATFTNGLLHIDLTRNEPETIAPQRIAINERSALNS</sequence>
<proteinExistence type="inferred from homology"/>
<feature type="chain" id="PRO_1000189107" description="Small heat shock protein IbpB">
    <location>
        <begin position="1"/>
        <end position="142"/>
    </location>
</feature>
<feature type="domain" description="sHSP" evidence="2">
    <location>
        <begin position="26"/>
        <end position="137"/>
    </location>
</feature>